<proteinExistence type="inferred from homology"/>
<evidence type="ECO:0000255" key="1">
    <source>
        <dbReference type="HAMAP-Rule" id="MF_03119"/>
    </source>
</evidence>
<reference key="1">
    <citation type="journal article" date="2004" name="Nature">
        <title>Genome evolution in yeasts.</title>
        <authorList>
            <person name="Dujon B."/>
            <person name="Sherman D."/>
            <person name="Fischer G."/>
            <person name="Durrens P."/>
            <person name="Casaregola S."/>
            <person name="Lafontaine I."/>
            <person name="de Montigny J."/>
            <person name="Marck C."/>
            <person name="Neuveglise C."/>
            <person name="Talla E."/>
            <person name="Goffard N."/>
            <person name="Frangeul L."/>
            <person name="Aigle M."/>
            <person name="Anthouard V."/>
            <person name="Babour A."/>
            <person name="Barbe V."/>
            <person name="Barnay S."/>
            <person name="Blanchin S."/>
            <person name="Beckerich J.-M."/>
            <person name="Beyne E."/>
            <person name="Bleykasten C."/>
            <person name="Boisrame A."/>
            <person name="Boyer J."/>
            <person name="Cattolico L."/>
            <person name="Confanioleri F."/>
            <person name="de Daruvar A."/>
            <person name="Despons L."/>
            <person name="Fabre E."/>
            <person name="Fairhead C."/>
            <person name="Ferry-Dumazet H."/>
            <person name="Groppi A."/>
            <person name="Hantraye F."/>
            <person name="Hennequin C."/>
            <person name="Jauniaux N."/>
            <person name="Joyet P."/>
            <person name="Kachouri R."/>
            <person name="Kerrest A."/>
            <person name="Koszul R."/>
            <person name="Lemaire M."/>
            <person name="Lesur I."/>
            <person name="Ma L."/>
            <person name="Muller H."/>
            <person name="Nicaud J.-M."/>
            <person name="Nikolski M."/>
            <person name="Oztas S."/>
            <person name="Ozier-Kalogeropoulos O."/>
            <person name="Pellenz S."/>
            <person name="Potier S."/>
            <person name="Richard G.-F."/>
            <person name="Straub M.-L."/>
            <person name="Suleau A."/>
            <person name="Swennen D."/>
            <person name="Tekaia F."/>
            <person name="Wesolowski-Louvel M."/>
            <person name="Westhof E."/>
            <person name="Wirth B."/>
            <person name="Zeniou-Meyer M."/>
            <person name="Zivanovic Y."/>
            <person name="Bolotin-Fukuhara M."/>
            <person name="Thierry A."/>
            <person name="Bouchier C."/>
            <person name="Caudron B."/>
            <person name="Scarpelli C."/>
            <person name="Gaillardin C."/>
            <person name="Weissenbach J."/>
            <person name="Wincker P."/>
            <person name="Souciet J.-L."/>
        </authorList>
    </citation>
    <scope>NUCLEOTIDE SEQUENCE [LARGE SCALE GENOMIC DNA]</scope>
    <source>
        <strain>ATCC 8585 / CBS 2359 / DSM 70799 / NBRC 1267 / NRRL Y-1140 / WM37</strain>
    </source>
</reference>
<dbReference type="EC" id="5.3.1.23" evidence="1"/>
<dbReference type="EMBL" id="CR382124">
    <property type="protein sequence ID" value="CAH00842.1"/>
    <property type="molecule type" value="Genomic_DNA"/>
</dbReference>
<dbReference type="RefSeq" id="XP_453746.1">
    <property type="nucleotide sequence ID" value="XM_453746.1"/>
</dbReference>
<dbReference type="SMR" id="Q6CQP3"/>
<dbReference type="FunCoup" id="Q6CQP3">
    <property type="interactions" value="755"/>
</dbReference>
<dbReference type="STRING" id="284590.Q6CQP3"/>
<dbReference type="PaxDb" id="284590-Q6CQP3"/>
<dbReference type="KEGG" id="kla:KLLA0_D15455g"/>
<dbReference type="eggNOG" id="KOG1468">
    <property type="taxonomic scope" value="Eukaryota"/>
</dbReference>
<dbReference type="HOGENOM" id="CLU_016218_1_3_1"/>
<dbReference type="InParanoid" id="Q6CQP3"/>
<dbReference type="OMA" id="CETRPLN"/>
<dbReference type="UniPathway" id="UPA00904">
    <property type="reaction ID" value="UER00874"/>
</dbReference>
<dbReference type="Proteomes" id="UP000000598">
    <property type="component" value="Chromosome D"/>
</dbReference>
<dbReference type="GO" id="GO:0005737">
    <property type="term" value="C:cytoplasm"/>
    <property type="evidence" value="ECO:0007669"/>
    <property type="project" value="UniProtKB-SubCell"/>
</dbReference>
<dbReference type="GO" id="GO:0005634">
    <property type="term" value="C:nucleus"/>
    <property type="evidence" value="ECO:0007669"/>
    <property type="project" value="UniProtKB-SubCell"/>
</dbReference>
<dbReference type="GO" id="GO:0046523">
    <property type="term" value="F:S-methyl-5-thioribose-1-phosphate isomerase activity"/>
    <property type="evidence" value="ECO:0007669"/>
    <property type="project" value="UniProtKB-UniRule"/>
</dbReference>
<dbReference type="GO" id="GO:0019509">
    <property type="term" value="P:L-methionine salvage from methylthioadenosine"/>
    <property type="evidence" value="ECO:0007669"/>
    <property type="project" value="UniProtKB-UniRule"/>
</dbReference>
<dbReference type="FunFam" id="1.20.120.420:FF:000003">
    <property type="entry name" value="Methylthioribose-1-phosphate isomerase"/>
    <property type="match status" value="1"/>
</dbReference>
<dbReference type="FunFam" id="3.40.50.10470:FF:000006">
    <property type="entry name" value="Methylthioribose-1-phosphate isomerase"/>
    <property type="match status" value="1"/>
</dbReference>
<dbReference type="Gene3D" id="1.20.120.420">
    <property type="entry name" value="translation initiation factor eif-2b, domain 1"/>
    <property type="match status" value="1"/>
</dbReference>
<dbReference type="Gene3D" id="3.40.50.10470">
    <property type="entry name" value="Translation initiation factor eif-2b, domain 2"/>
    <property type="match status" value="1"/>
</dbReference>
<dbReference type="HAMAP" id="MF_01678">
    <property type="entry name" value="Salvage_MtnA"/>
    <property type="match status" value="1"/>
</dbReference>
<dbReference type="InterPro" id="IPR000649">
    <property type="entry name" value="IF-2B-related"/>
</dbReference>
<dbReference type="InterPro" id="IPR005251">
    <property type="entry name" value="IF-M1Pi"/>
</dbReference>
<dbReference type="InterPro" id="IPR042529">
    <property type="entry name" value="IF_2B-like_C"/>
</dbReference>
<dbReference type="InterPro" id="IPR011559">
    <property type="entry name" value="Initiation_fac_2B_a/b/d"/>
</dbReference>
<dbReference type="InterPro" id="IPR027363">
    <property type="entry name" value="M1Pi_N"/>
</dbReference>
<dbReference type="InterPro" id="IPR037171">
    <property type="entry name" value="NagB/RpiA_transferase-like"/>
</dbReference>
<dbReference type="NCBIfam" id="TIGR00524">
    <property type="entry name" value="eIF-2B_rel"/>
    <property type="match status" value="1"/>
</dbReference>
<dbReference type="NCBIfam" id="NF004326">
    <property type="entry name" value="PRK05720.1"/>
    <property type="match status" value="1"/>
</dbReference>
<dbReference type="NCBIfam" id="TIGR00512">
    <property type="entry name" value="salvage_mtnA"/>
    <property type="match status" value="1"/>
</dbReference>
<dbReference type="PANTHER" id="PTHR43475">
    <property type="entry name" value="METHYLTHIORIBOSE-1-PHOSPHATE ISOMERASE"/>
    <property type="match status" value="1"/>
</dbReference>
<dbReference type="PANTHER" id="PTHR43475:SF1">
    <property type="entry name" value="METHYLTHIORIBOSE-1-PHOSPHATE ISOMERASE"/>
    <property type="match status" value="1"/>
</dbReference>
<dbReference type="Pfam" id="PF01008">
    <property type="entry name" value="IF-2B"/>
    <property type="match status" value="1"/>
</dbReference>
<dbReference type="SUPFAM" id="SSF100950">
    <property type="entry name" value="NagB/RpiA/CoA transferase-like"/>
    <property type="match status" value="1"/>
</dbReference>
<feature type="chain" id="PRO_0000402029" description="Methylthioribose-1-phosphate isomerase">
    <location>
        <begin position="1"/>
        <end position="407"/>
    </location>
</feature>
<feature type="active site" description="Proton donor" evidence="1">
    <location>
        <position position="275"/>
    </location>
</feature>
<feature type="site" description="Transition state stabilizer" evidence="1">
    <location>
        <position position="175"/>
    </location>
</feature>
<name>MTNA_KLULA</name>
<accession>Q6CQP3</accession>
<comment type="function">
    <text evidence="1">Catalyzes the interconversion of methylthioribose-1-phosphate (MTR-1-P) into methylthioribulose-1-phosphate (MTRu-1-P).</text>
</comment>
<comment type="catalytic activity">
    <reaction evidence="1">
        <text>5-(methylsulfanyl)-alpha-D-ribose 1-phosphate = 5-(methylsulfanyl)-D-ribulose 1-phosphate</text>
        <dbReference type="Rhea" id="RHEA:19989"/>
        <dbReference type="ChEBI" id="CHEBI:58533"/>
        <dbReference type="ChEBI" id="CHEBI:58548"/>
        <dbReference type="EC" id="5.3.1.23"/>
    </reaction>
</comment>
<comment type="pathway">
    <text evidence="1">Amino-acid biosynthesis; L-methionine biosynthesis via salvage pathway; L-methionine from S-methyl-5-thio-alpha-D-ribose 1-phosphate: step 1/6.</text>
</comment>
<comment type="subcellular location">
    <subcellularLocation>
        <location evidence="1">Cytoplasm</location>
    </subcellularLocation>
    <subcellularLocation>
        <location evidence="1">Nucleus</location>
    </subcellularLocation>
</comment>
<comment type="similarity">
    <text evidence="1">Belongs to the eIF-2B alpha/beta/delta subunits family. MtnA subfamily.</text>
</comment>
<sequence length="407" mass="45165">MSLKAIVFDRVLGKCSVKILDQLLLPYQTQYLTINTIDDGYRSIKSMQVRGAPAIAIVGVLSTLMECQLLLQESFVKTQSFYDLTQLEKILNERLDLLLSSRPTAVNLSNAITDLRKLISNDIGKTYNSLFQYACDIIDHDYADNFTMGENGAKHLLAQLEKEAFEGDFGVLTICNTGSLATSGYGTALGVIRSLYERTKKQISGDEQPKRTKTSNAKMVRVFPLETRPYNQGSRLTAYELLHDEIPSTLITDSSISYLVSTSKIPIKAAFVGADRIVKNGDTANKIGTYQLSIVCRHFGIKFYVVAPTTTFDSNTETGDKIVVEERPPNEFRFVQGTLIDGTDPTPVLNESKTPVKAKVGITPLDMPVWNPSFDITPYTHIDGIITEKGVFAKDENGNFHLETAFQ</sequence>
<organism>
    <name type="scientific">Kluyveromyces lactis (strain ATCC 8585 / CBS 2359 / DSM 70799 / NBRC 1267 / NRRL Y-1140 / WM37)</name>
    <name type="common">Yeast</name>
    <name type="synonym">Candida sphaerica</name>
    <dbReference type="NCBI Taxonomy" id="284590"/>
    <lineage>
        <taxon>Eukaryota</taxon>
        <taxon>Fungi</taxon>
        <taxon>Dikarya</taxon>
        <taxon>Ascomycota</taxon>
        <taxon>Saccharomycotina</taxon>
        <taxon>Saccharomycetes</taxon>
        <taxon>Saccharomycetales</taxon>
        <taxon>Saccharomycetaceae</taxon>
        <taxon>Kluyveromyces</taxon>
    </lineage>
</organism>
<protein>
    <recommendedName>
        <fullName evidence="1">Methylthioribose-1-phosphate isomerase</fullName>
        <shortName evidence="1">M1Pi</shortName>
        <shortName evidence="1">MTR-1-P isomerase</shortName>
        <ecNumber evidence="1">5.3.1.23</ecNumber>
    </recommendedName>
    <alternativeName>
        <fullName evidence="1">S-methyl-5-thioribose-1-phosphate isomerase</fullName>
    </alternativeName>
    <alternativeName>
        <fullName evidence="1">Translation initiation factor eIF-2B subunit alpha/beta/delta-like protein</fullName>
    </alternativeName>
</protein>
<keyword id="KW-0028">Amino-acid biosynthesis</keyword>
<keyword id="KW-0963">Cytoplasm</keyword>
<keyword id="KW-0413">Isomerase</keyword>
<keyword id="KW-0486">Methionine biosynthesis</keyword>
<keyword id="KW-0539">Nucleus</keyword>
<keyword id="KW-1185">Reference proteome</keyword>
<gene>
    <name evidence="1" type="primary">MRI1</name>
    <name type="ordered locus">KLLA0D15455g</name>
</gene>